<sequence length="839" mass="93920">MRWSFLTVLLWLVSLTGAENGFNGWLRYAPVQCDKRCQRALPSSIVTLNSTDSGPIGTASQELQAGLENIVGKQLSIKRSSCGSRSSILVATLEQYRQACNRSSEVPSLGIDGFWLRAYGDTVQIVGENERGALYGAFEYLSLLAQGNFSHVDYTTSAHAPVRWVNQWDNMDGSIERGYAGPSIFFEDGHIVEDLSRVKQYARLLASIRINGVIVNNVNANATLLTSQNMDGLARIANVFRPYGIQIGISLNFASPDTLGGLGTYDPLDPSVISWWANITDSLYDRVPDMAGYLVKASSEGQPGPDTYNRTLAEGANVFAKALQPHGGILMFRTFVYDHHINESIWTNDRANAQVDFFKELDGQFEDNVILQIKYGPIDFQVREPVSPLFANLYKTNMAIELQVTQEYLGQQDHLVYLSPLWKELLDFDLRVDHQPSLVRDIVSGQRFDRQLGGWAAVVNVGTNTTWLGSHLAMSNLYAYGRLAWSPTDDSQGILQDWIRLTFGRDQNVLDTITDMSMASWPAYENYTGNLGIQTLTDILYTHYGPNPASQDNNGWGQWTRADHDTIGMDRTVKNGTGNAGQYPAEIAQVYEDLDSTPDDLLLWFHHVPYTHRLHSGKTVIQHFYDAHYDGAETAHRFLSQWESLKGRIDQQRYNEVLSRLVYQAGHSLVWRDAINNFYWNMSGISDEKNRVGHHPWRVEAESMTLDGYEPYTVSPFETASNYKAVVTTSNSTTGTAQTKLQFPSGTYDLGVNYYDMYGGKSEWTVYVNDRVVGQWEGNSENTLGHTPSIYIDGHSATRITFRGVEIENGDQLKIVGVPDGVEPAPLDYVVLLPPDVVD</sequence>
<proteinExistence type="inferred from homology"/>
<name>AGUA_ASPFN</name>
<keyword id="KW-0119">Carbohydrate metabolism</keyword>
<keyword id="KW-0325">Glycoprotein</keyword>
<keyword id="KW-0326">Glycosidase</keyword>
<keyword id="KW-0378">Hydrolase</keyword>
<keyword id="KW-0624">Polysaccharide degradation</keyword>
<keyword id="KW-0964">Secreted</keyword>
<keyword id="KW-0732">Signal</keyword>
<keyword id="KW-0858">Xylan degradation</keyword>
<organism>
    <name type="scientific">Aspergillus flavus (strain ATCC 200026 / FGSC A1120 / IAM 13836 / NRRL 3357 / JCM 12722 / SRRC 167)</name>
    <dbReference type="NCBI Taxonomy" id="332952"/>
    <lineage>
        <taxon>Eukaryota</taxon>
        <taxon>Fungi</taxon>
        <taxon>Dikarya</taxon>
        <taxon>Ascomycota</taxon>
        <taxon>Pezizomycotina</taxon>
        <taxon>Eurotiomycetes</taxon>
        <taxon>Eurotiomycetidae</taxon>
        <taxon>Eurotiales</taxon>
        <taxon>Aspergillaceae</taxon>
        <taxon>Aspergillus</taxon>
        <taxon>Aspergillus subgen. Circumdati</taxon>
    </lineage>
</organism>
<reference key="1">
    <citation type="journal article" date="2015" name="Genome Announc.">
        <title>Genome sequence of Aspergillus flavus NRRL 3357, a strain that causes aflatoxin contamination of food and feed.</title>
        <authorList>
            <person name="Nierman W.C."/>
            <person name="Yu J."/>
            <person name="Fedorova-Abrams N.D."/>
            <person name="Losada L."/>
            <person name="Cleveland T.E."/>
            <person name="Bhatnagar D."/>
            <person name="Bennett J.W."/>
            <person name="Dean R."/>
            <person name="Payne G.A."/>
        </authorList>
    </citation>
    <scope>NUCLEOTIDE SEQUENCE [LARGE SCALE GENOMIC DNA]</scope>
    <source>
        <strain>ATCC 200026 / FGSC A1120 / IAM 13836 / NRRL 3357 / JCM 12722 / SRRC 167</strain>
    </source>
</reference>
<gene>
    <name type="primary">aguA</name>
    <name type="ORF">AFLA_138090</name>
</gene>
<accession>B8NGU1</accession>
<feature type="signal peptide" evidence="2">
    <location>
        <begin position="1"/>
        <end position="18"/>
    </location>
</feature>
<feature type="chain" id="PRO_0000393487" description="Probable alpha-glucuronidase A">
    <location>
        <begin position="19"/>
        <end position="839"/>
    </location>
</feature>
<feature type="glycosylation site" description="N-linked (GlcNAc...) asparagine" evidence="2">
    <location>
        <position position="49"/>
    </location>
</feature>
<feature type="glycosylation site" description="N-linked (GlcNAc...) asparagine" evidence="2">
    <location>
        <position position="101"/>
    </location>
</feature>
<feature type="glycosylation site" description="N-linked (GlcNAc...) asparagine" evidence="2">
    <location>
        <position position="148"/>
    </location>
</feature>
<feature type="glycosylation site" description="N-linked (GlcNAc...) asparagine" evidence="2">
    <location>
        <position position="221"/>
    </location>
</feature>
<feature type="glycosylation site" description="N-linked (GlcNAc...) asparagine" evidence="2">
    <location>
        <position position="278"/>
    </location>
</feature>
<feature type="glycosylation site" description="N-linked (GlcNAc...) asparagine" evidence="2">
    <location>
        <position position="309"/>
    </location>
</feature>
<feature type="glycosylation site" description="N-linked (GlcNAc...) asparagine" evidence="2">
    <location>
        <position position="342"/>
    </location>
</feature>
<feature type="glycosylation site" description="N-linked (GlcNAc...) asparagine" evidence="2">
    <location>
        <position position="464"/>
    </location>
</feature>
<feature type="glycosylation site" description="N-linked (GlcNAc...) asparagine" evidence="2">
    <location>
        <position position="526"/>
    </location>
</feature>
<feature type="glycosylation site" description="N-linked (GlcNAc...) asparagine" evidence="2">
    <location>
        <position position="575"/>
    </location>
</feature>
<feature type="glycosylation site" description="N-linked (GlcNAc...) asparagine" evidence="2">
    <location>
        <position position="681"/>
    </location>
</feature>
<feature type="glycosylation site" description="N-linked (GlcNAc...) asparagine" evidence="2">
    <location>
        <position position="731"/>
    </location>
</feature>
<protein>
    <recommendedName>
        <fullName>Probable alpha-glucuronidase A</fullName>
        <ecNumber>3.2.1.139</ecNumber>
    </recommendedName>
    <alternativeName>
        <fullName>Alpha-glucosiduronase A</fullName>
    </alternativeName>
</protein>
<dbReference type="EC" id="3.2.1.139"/>
<dbReference type="EMBL" id="EQ963478">
    <property type="protein sequence ID" value="EED51045.1"/>
    <property type="molecule type" value="Genomic_DNA"/>
</dbReference>
<dbReference type="RefSeq" id="XP_002379821.1">
    <property type="nucleotide sequence ID" value="XM_002379780.1"/>
</dbReference>
<dbReference type="SMR" id="B8NGU1"/>
<dbReference type="STRING" id="332952.B8NGU1"/>
<dbReference type="GlyCosmos" id="B8NGU1">
    <property type="glycosylation" value="12 sites, No reported glycans"/>
</dbReference>
<dbReference type="EnsemblFungi" id="EED51045">
    <property type="protein sequence ID" value="EED51045"/>
    <property type="gene ID" value="AFLA_138090"/>
</dbReference>
<dbReference type="VEuPathDB" id="FungiDB:AFLA_006176"/>
<dbReference type="eggNOG" id="ENOG502QWS4">
    <property type="taxonomic scope" value="Eukaryota"/>
</dbReference>
<dbReference type="HOGENOM" id="CLU_007125_2_0_1"/>
<dbReference type="OMA" id="IWRAFVY"/>
<dbReference type="GO" id="GO:0005576">
    <property type="term" value="C:extracellular region"/>
    <property type="evidence" value="ECO:0007669"/>
    <property type="project" value="UniProtKB-SubCell"/>
</dbReference>
<dbReference type="GO" id="GO:0046559">
    <property type="term" value="F:alpha-glucuronidase activity"/>
    <property type="evidence" value="ECO:0007669"/>
    <property type="project" value="UniProtKB-EC"/>
</dbReference>
<dbReference type="GO" id="GO:0045493">
    <property type="term" value="P:xylan catabolic process"/>
    <property type="evidence" value="ECO:0007669"/>
    <property type="project" value="UniProtKB-KW"/>
</dbReference>
<dbReference type="CDD" id="cd02795">
    <property type="entry name" value="CBM6-CBM35-CBM36_like"/>
    <property type="match status" value="1"/>
</dbReference>
<dbReference type="FunFam" id="3.20.20.80:FF:000096">
    <property type="entry name" value="Xylan alpha-1,2-glucuronidase"/>
    <property type="match status" value="1"/>
</dbReference>
<dbReference type="FunFam" id="3.90.1330.10:FF:000001">
    <property type="entry name" value="Xylan alpha-1,2-glucuronidase"/>
    <property type="match status" value="1"/>
</dbReference>
<dbReference type="Gene3D" id="3.90.1330.10">
    <property type="entry name" value="Alpha-glucuronidase, C-terminal domain"/>
    <property type="match status" value="1"/>
</dbReference>
<dbReference type="Gene3D" id="3.30.379.10">
    <property type="entry name" value="Chitobiase/beta-hexosaminidase domain 2-like"/>
    <property type="match status" value="1"/>
</dbReference>
<dbReference type="Gene3D" id="3.20.20.80">
    <property type="entry name" value="Glycosidases"/>
    <property type="match status" value="1"/>
</dbReference>
<dbReference type="InterPro" id="IPR037054">
    <property type="entry name" value="A-glucoronidase_C_sf"/>
</dbReference>
<dbReference type="InterPro" id="IPR011395">
    <property type="entry name" value="Glyco_hydro_67_aGlcAse"/>
</dbReference>
<dbReference type="InterPro" id="IPR005154">
    <property type="entry name" value="Glyco_hydro_67_aGlcAse_N"/>
</dbReference>
<dbReference type="InterPro" id="IPR011099">
    <property type="entry name" value="Glyco_hydro_67_C"/>
</dbReference>
<dbReference type="InterPro" id="IPR011100">
    <property type="entry name" value="Glyco_hydro_67_cat"/>
</dbReference>
<dbReference type="InterPro" id="IPR017853">
    <property type="entry name" value="Glycoside_hydrolase_SF"/>
</dbReference>
<dbReference type="InterPro" id="IPR029018">
    <property type="entry name" value="Hex-like_dom2"/>
</dbReference>
<dbReference type="PANTHER" id="PTHR39207">
    <property type="entry name" value="ALPHA-GLUCURONIDASE A"/>
    <property type="match status" value="1"/>
</dbReference>
<dbReference type="PANTHER" id="PTHR39207:SF1">
    <property type="entry name" value="ALPHA-GLUCURONIDASE A"/>
    <property type="match status" value="1"/>
</dbReference>
<dbReference type="Pfam" id="PF07477">
    <property type="entry name" value="Glyco_hydro_67C"/>
    <property type="match status" value="1"/>
</dbReference>
<dbReference type="Pfam" id="PF07488">
    <property type="entry name" value="Glyco_hydro_67M"/>
    <property type="match status" value="1"/>
</dbReference>
<dbReference type="Pfam" id="PF03648">
    <property type="entry name" value="Glyco_hydro_67N"/>
    <property type="match status" value="1"/>
</dbReference>
<dbReference type="PIRSF" id="PIRSF029900">
    <property type="entry name" value="Alpha-glucuronds"/>
    <property type="match status" value="1"/>
</dbReference>
<dbReference type="SUPFAM" id="SSF51445">
    <property type="entry name" value="(Trans)glycosidases"/>
    <property type="match status" value="1"/>
</dbReference>
<dbReference type="SUPFAM" id="SSF55545">
    <property type="entry name" value="beta-N-acetylhexosaminidase-like domain"/>
    <property type="match status" value="1"/>
</dbReference>
<comment type="function">
    <text evidence="1">Alpha-glucuronidase involved in the hydrolysis of xylan, a major structural heterogeneous polysaccharide found in plant biomass representing the second most abundant polysaccharide in the biosphere, after cellulose. Releases 4-O-methylglucuronic acid from xylan (By similarity).</text>
</comment>
<comment type="catalytic activity">
    <reaction>
        <text>an alpha-D-glucuronoside + H2O = D-glucuronate + an alcohol</text>
        <dbReference type="Rhea" id="RHEA:20005"/>
        <dbReference type="ChEBI" id="CHEBI:15377"/>
        <dbReference type="ChEBI" id="CHEBI:30879"/>
        <dbReference type="ChEBI" id="CHEBI:58720"/>
        <dbReference type="ChEBI" id="CHEBI:58899"/>
        <dbReference type="EC" id="3.2.1.139"/>
    </reaction>
</comment>
<comment type="subcellular location">
    <subcellularLocation>
        <location evidence="1">Secreted</location>
    </subcellularLocation>
</comment>
<comment type="similarity">
    <text evidence="3">Belongs to the glycosyl hydrolase 67 family.</text>
</comment>
<evidence type="ECO:0000250" key="1"/>
<evidence type="ECO:0000255" key="2"/>
<evidence type="ECO:0000305" key="3"/>